<name>COXZ_CERS4</name>
<evidence type="ECO:0000255" key="1">
    <source>
        <dbReference type="HAMAP-Rule" id="MF_00155"/>
    </source>
</evidence>
<feature type="chain" id="PRO_0000246140" description="Cytochrome c oxidase assembly protein CtaG">
    <location>
        <begin position="1"/>
        <end position="191"/>
    </location>
</feature>
<feature type="topological domain" description="Cytoplasmic" evidence="1">
    <location>
        <begin position="1"/>
        <end position="9"/>
    </location>
</feature>
<feature type="transmembrane region" description="Helical; Signal-anchor for type II membrane protein" evidence="1">
    <location>
        <begin position="10"/>
        <end position="30"/>
    </location>
</feature>
<feature type="topological domain" description="Periplasmic" evidence="1">
    <location>
        <begin position="31"/>
        <end position="191"/>
    </location>
</feature>
<accession>Q3J5F7</accession>
<organism>
    <name type="scientific">Cereibacter sphaeroides (strain ATCC 17023 / DSM 158 / JCM 6121 / CCUG 31486 / LMG 2827 / NBRC 12203 / NCIMB 8253 / ATH 2.4.1.)</name>
    <name type="common">Rhodobacter sphaeroides</name>
    <dbReference type="NCBI Taxonomy" id="272943"/>
    <lineage>
        <taxon>Bacteria</taxon>
        <taxon>Pseudomonadati</taxon>
        <taxon>Pseudomonadota</taxon>
        <taxon>Alphaproteobacteria</taxon>
        <taxon>Rhodobacterales</taxon>
        <taxon>Paracoccaceae</taxon>
        <taxon>Cereibacter</taxon>
    </lineage>
</organism>
<protein>
    <recommendedName>
        <fullName evidence="1">Cytochrome c oxidase assembly protein CtaG</fullName>
    </recommendedName>
</protein>
<dbReference type="EMBL" id="CP000143">
    <property type="protein sequence ID" value="ABA77977.1"/>
    <property type="molecule type" value="Genomic_DNA"/>
</dbReference>
<dbReference type="RefSeq" id="WP_011337013.1">
    <property type="nucleotide sequence ID" value="NZ_CP030271.1"/>
</dbReference>
<dbReference type="RefSeq" id="YP_351878.1">
    <property type="nucleotide sequence ID" value="NC_007493.2"/>
</dbReference>
<dbReference type="SMR" id="Q3J5F7"/>
<dbReference type="STRING" id="272943.RSP_1828"/>
<dbReference type="EnsemblBacteria" id="ABA77977">
    <property type="protein sequence ID" value="ABA77977"/>
    <property type="gene ID" value="RSP_1828"/>
</dbReference>
<dbReference type="KEGG" id="rsp:RSP_1828"/>
<dbReference type="PATRIC" id="fig|272943.9.peg.715"/>
<dbReference type="eggNOG" id="COG3175">
    <property type="taxonomic scope" value="Bacteria"/>
</dbReference>
<dbReference type="OrthoDB" id="9804841at2"/>
<dbReference type="PhylomeDB" id="Q3J5F7"/>
<dbReference type="Proteomes" id="UP000002703">
    <property type="component" value="Chromosome 1"/>
</dbReference>
<dbReference type="GO" id="GO:0005886">
    <property type="term" value="C:plasma membrane"/>
    <property type="evidence" value="ECO:0007669"/>
    <property type="project" value="UniProtKB-SubCell"/>
</dbReference>
<dbReference type="GO" id="GO:0005507">
    <property type="term" value="F:copper ion binding"/>
    <property type="evidence" value="ECO:0007669"/>
    <property type="project" value="InterPro"/>
</dbReference>
<dbReference type="GO" id="GO:0008535">
    <property type="term" value="P:respiratory chain complex IV assembly"/>
    <property type="evidence" value="ECO:0007669"/>
    <property type="project" value="UniProtKB-UniRule"/>
</dbReference>
<dbReference type="FunFam" id="2.60.370.10:FF:000001">
    <property type="entry name" value="COX11 cytochrome c oxidase assembly homolog"/>
    <property type="match status" value="1"/>
</dbReference>
<dbReference type="Gene3D" id="2.60.370.10">
    <property type="entry name" value="Ctag/Cox11"/>
    <property type="match status" value="1"/>
</dbReference>
<dbReference type="HAMAP" id="MF_00155">
    <property type="entry name" value="CtaG"/>
    <property type="match status" value="1"/>
</dbReference>
<dbReference type="InterPro" id="IPR023471">
    <property type="entry name" value="CtaG/Cox11_dom_sf"/>
</dbReference>
<dbReference type="InterPro" id="IPR007533">
    <property type="entry name" value="Cyt_c_oxidase_assmbl_CtaG"/>
</dbReference>
<dbReference type="NCBIfam" id="NF003465">
    <property type="entry name" value="PRK05089.1"/>
    <property type="match status" value="1"/>
</dbReference>
<dbReference type="PANTHER" id="PTHR21320:SF3">
    <property type="entry name" value="CYTOCHROME C OXIDASE ASSEMBLY PROTEIN COX11, MITOCHONDRIAL-RELATED"/>
    <property type="match status" value="1"/>
</dbReference>
<dbReference type="PANTHER" id="PTHR21320">
    <property type="entry name" value="CYTOCHROME C OXIDASE ASSEMBLY PROTEIN COX11-RELATED"/>
    <property type="match status" value="1"/>
</dbReference>
<dbReference type="Pfam" id="PF04442">
    <property type="entry name" value="CtaG_Cox11"/>
    <property type="match status" value="1"/>
</dbReference>
<dbReference type="PIRSF" id="PIRSF005413">
    <property type="entry name" value="COX11"/>
    <property type="match status" value="1"/>
</dbReference>
<dbReference type="SUPFAM" id="SSF110111">
    <property type="entry name" value="Ctag/Cox11"/>
    <property type="match status" value="1"/>
</dbReference>
<proteinExistence type="inferred from homology"/>
<reference key="1">
    <citation type="submission" date="2005-09" db="EMBL/GenBank/DDBJ databases">
        <title>Complete sequence of chromosome 1 of Rhodobacter sphaeroides 2.4.1.</title>
        <authorList>
            <person name="Copeland A."/>
            <person name="Lucas S."/>
            <person name="Lapidus A."/>
            <person name="Barry K."/>
            <person name="Detter J.C."/>
            <person name="Glavina T."/>
            <person name="Hammon N."/>
            <person name="Israni S."/>
            <person name="Pitluck S."/>
            <person name="Richardson P."/>
            <person name="Mackenzie C."/>
            <person name="Choudhary M."/>
            <person name="Larimer F."/>
            <person name="Hauser L.J."/>
            <person name="Land M."/>
            <person name="Donohue T.J."/>
            <person name="Kaplan S."/>
        </authorList>
    </citation>
    <scope>NUCLEOTIDE SEQUENCE [LARGE SCALE GENOMIC DNA]</scope>
    <source>
        <strain>ATCC 17023 / DSM 158 / JCM 6121 / CCUG 31486 / LMG 2827 / NBRC 12203 / NCIMB 8253 / ATH 2.4.1.</strain>
    </source>
</reference>
<sequence>MSLSPHQKTAGGLVLVVAVMGAASFAAVPFYNWFCRVTGFAGTTAVATEAPAEVLDRTVKVRFDASREAGMPWEFRPLQREMKLKIGETGLAFYEAYNPTDRTVAGTASYNVTPDAAGGYFAKIACFCFTEQVLAPGERVEMPVTFYVDPAIIDDPDGRYVRQITLSYTFHETALTEEQAALAAESATDVN</sequence>
<comment type="function">
    <text evidence="1">Exerts its effect at some terminal stage of cytochrome c oxidase synthesis, probably by being involved in the insertion of the copper B into subunit I.</text>
</comment>
<comment type="subcellular location">
    <subcellularLocation>
        <location evidence="1">Cell inner membrane</location>
        <topology evidence="1">Single-pass type II membrane protein</topology>
        <orientation evidence="1">Periplasmic side</orientation>
    </subcellularLocation>
</comment>
<comment type="similarity">
    <text evidence="1">Belongs to the COX11/CtaG family.</text>
</comment>
<keyword id="KW-0997">Cell inner membrane</keyword>
<keyword id="KW-1003">Cell membrane</keyword>
<keyword id="KW-0186">Copper</keyword>
<keyword id="KW-0472">Membrane</keyword>
<keyword id="KW-1185">Reference proteome</keyword>
<keyword id="KW-0735">Signal-anchor</keyword>
<keyword id="KW-0812">Transmembrane</keyword>
<keyword id="KW-1133">Transmembrane helix</keyword>
<gene>
    <name evidence="1" type="primary">ctaG</name>
    <name type="ordered locus">RHOS4_04090</name>
    <name type="ORF">RSP_1828</name>
</gene>